<comment type="function">
    <text evidence="1 3">Constituent of viral factories.</text>
</comment>
<comment type="subcellular location">
    <subcellularLocation>
        <location evidence="3">Host cytoplasm</location>
    </subcellularLocation>
    <text>Constituent of spherical cytoplasmic structures, called virus factories, that appear early after infection and are the site of viral replication and packaging.</text>
</comment>
<comment type="similarity">
    <text evidence="4">Belongs to the phytoreovirus non-structural protein Pns12A family.</text>
</comment>
<feature type="chain" id="PRO_0000222803" description="Non-structural protein 12A">
    <location>
        <begin position="1"/>
        <end position="312"/>
    </location>
</feature>
<feature type="region of interest" description="Disordered" evidence="2">
    <location>
        <begin position="1"/>
        <end position="37"/>
    </location>
</feature>
<feature type="region of interest" description="Disordered" evidence="2">
    <location>
        <begin position="63"/>
        <end position="97"/>
    </location>
</feature>
<feature type="region of interest" description="Disordered" evidence="2">
    <location>
        <begin position="114"/>
        <end position="162"/>
    </location>
</feature>
<feature type="compositionally biased region" description="Low complexity" evidence="2">
    <location>
        <begin position="1"/>
        <end position="23"/>
    </location>
</feature>
<feature type="compositionally biased region" description="Basic and acidic residues" evidence="2">
    <location>
        <begin position="63"/>
        <end position="73"/>
    </location>
</feature>
<feature type="compositionally biased region" description="Polar residues" evidence="2">
    <location>
        <begin position="74"/>
        <end position="97"/>
    </location>
</feature>
<feature type="compositionally biased region" description="Basic and acidic residues" evidence="2">
    <location>
        <begin position="122"/>
        <end position="134"/>
    </location>
</feature>
<accession>Q85443</accession>
<organism>
    <name type="scientific">Rice dwarf virus (isolate Fujian)</name>
    <name type="common">RDV</name>
    <dbReference type="NCBI Taxonomy" id="142804"/>
    <lineage>
        <taxon>Viruses</taxon>
        <taxon>Riboviria</taxon>
        <taxon>Orthornavirae</taxon>
        <taxon>Duplornaviricota</taxon>
        <taxon>Resentoviricetes</taxon>
        <taxon>Reovirales</taxon>
        <taxon>Sedoreoviridae</taxon>
        <taxon>Phytoreovirus</taxon>
        <taxon>Rice dwarf virus</taxon>
    </lineage>
</organism>
<protein>
    <recommendedName>
        <fullName>Non-structural protein 12A</fullName>
        <shortName>Pns12A</shortName>
    </recommendedName>
</protein>
<keyword id="KW-1035">Host cytoplasm</keyword>
<keyword id="KW-1185">Reference proteome</keyword>
<reference key="1">
    <citation type="journal article" date="1994" name="Ping Tu Hsueh Pao">
        <title>cDNA synthesis, molecular cloning and sequence analysis of rice dwarf virus segment S12.</title>
        <authorList>
            <person name="Li Y."/>
            <person name="Xue Z."/>
            <person name="Liu Y."/>
            <person name="Quan S."/>
            <person name="Pan N."/>
            <person name="Chen Z."/>
        </authorList>
    </citation>
    <scope>NUCLEOTIDE SEQUENCE [MRNA]</scope>
</reference>
<reference key="2">
    <citation type="journal article" date="2006" name="J. Gen. Virol.">
        <title>Pns12 protein of Rice dwarf virus is essential for formation of viroplasms and nucleation of viral-assembly complexes.</title>
        <authorList>
            <person name="Wei T."/>
            <person name="Shimizu T."/>
            <person name="Hagiwara K."/>
            <person name="Kikuchi A."/>
            <person name="Moriyasu Y."/>
            <person name="Suzuki N."/>
            <person name="Chen H."/>
            <person name="Omura T."/>
        </authorList>
    </citation>
    <scope>FUNCTION</scope>
    <scope>SUBCELLULAR LOCATION</scope>
</reference>
<dbReference type="EMBL" id="U36569">
    <property type="protein sequence ID" value="AAA88768.1"/>
    <property type="molecule type" value="mRNA"/>
</dbReference>
<dbReference type="RefSeq" id="NP_620538.1">
    <property type="nucleotide sequence ID" value="NC_003768.1"/>
</dbReference>
<dbReference type="GeneID" id="956503"/>
<dbReference type="KEGG" id="vg:956503"/>
<dbReference type="Proteomes" id="UP000002239">
    <property type="component" value="Genome"/>
</dbReference>
<dbReference type="GO" id="GO:0030430">
    <property type="term" value="C:host cell cytoplasm"/>
    <property type="evidence" value="ECO:0007669"/>
    <property type="project" value="UniProtKB-SubCell"/>
</dbReference>
<sequence length="312" mass="34175">MFKSGSGSLKRSGSISSVKSFSGDSEKGLPPISRGSVSITSQNYEPLIVPANSSSFAAASDFVPEKTKSEGNLKNKSSVITGNFESSGPTNAHYNQNADGDRLVENLLLKEIAKGRGPSTSDARHTATDSRLSQEVKQPFSEENAGGNDLNTGRGSHGTGDGIEQYHKSDCEERMSAYHKRVVDTFFKYFEYSAEDGHSTLYSDVAFLFGCGDLDLLVMSRYQEVMTLRARSAIYGIFCYLQALTAYLTYLGAKVGQVIMLDEELEKYEIRLDVAQDDDPIVFQITTGVFTSGVAHDLRKLTQILEAFSLER</sequence>
<name>NSP12_RDVF</name>
<evidence type="ECO:0000250" key="1"/>
<evidence type="ECO:0000256" key="2">
    <source>
        <dbReference type="SAM" id="MobiDB-lite"/>
    </source>
</evidence>
<evidence type="ECO:0000269" key="3">
    <source>
    </source>
</evidence>
<evidence type="ECO:0000305" key="4"/>
<organismHost>
    <name type="scientific">Alopecurus aequalis</name>
    <dbReference type="NCBI Taxonomy" id="114194"/>
</organismHost>
<organismHost>
    <name type="scientific">Echinochloa crus-galli</name>
    <name type="common">Barnyard grass</name>
    <name type="synonym">Panicum crus-galli</name>
    <dbReference type="NCBI Taxonomy" id="90397"/>
</organismHost>
<organismHost>
    <name type="scientific">Nephotettix cincticeps</name>
    <name type="common">Green rice leafhopper</name>
    <name type="synonym">Selenocephalus cincticeps</name>
    <dbReference type="NCBI Taxonomy" id="94400"/>
</organismHost>
<organismHost>
    <name type="scientific">Oryza sativa</name>
    <name type="common">Rice</name>
    <dbReference type="NCBI Taxonomy" id="4530"/>
</organismHost>
<organismHost>
    <name type="scientific">Paspalum</name>
    <dbReference type="NCBI Taxonomy" id="147271"/>
</organismHost>
<proteinExistence type="evidence at transcript level"/>